<reference key="1">
    <citation type="journal article" date="2009" name="PLoS ONE">
        <title>Genome degradation in Brucella ovis corresponds with narrowing of its host range and tissue tropism.</title>
        <authorList>
            <person name="Tsolis R.M."/>
            <person name="Seshadri R."/>
            <person name="Santos R.L."/>
            <person name="Sangari F.J."/>
            <person name="Lobo J.M."/>
            <person name="de Jong M.F."/>
            <person name="Ren Q."/>
            <person name="Myers G."/>
            <person name="Brinkac L.M."/>
            <person name="Nelson W.C."/>
            <person name="Deboy R.T."/>
            <person name="Angiuoli S."/>
            <person name="Khouri H."/>
            <person name="Dimitrov G."/>
            <person name="Robinson J.R."/>
            <person name="Mulligan S."/>
            <person name="Walker R.L."/>
            <person name="Elzer P.E."/>
            <person name="Hassan K.A."/>
            <person name="Paulsen I.T."/>
        </authorList>
    </citation>
    <scope>NUCLEOTIDE SEQUENCE [LARGE SCALE GENOMIC DNA]</scope>
    <source>
        <strain>ATCC 25840 / 63/290 / NCTC 10512</strain>
    </source>
</reference>
<evidence type="ECO:0000255" key="1">
    <source>
        <dbReference type="HAMAP-Rule" id="MF_00476"/>
    </source>
</evidence>
<feature type="chain" id="PRO_1000014057" description="Putative nickel-responsive regulator">
    <location>
        <begin position="1"/>
        <end position="132"/>
    </location>
</feature>
<feature type="binding site" evidence="1">
    <location>
        <position position="77"/>
    </location>
    <ligand>
        <name>Ni(2+)</name>
        <dbReference type="ChEBI" id="CHEBI:49786"/>
    </ligand>
</feature>
<feature type="binding site" evidence="1">
    <location>
        <position position="88"/>
    </location>
    <ligand>
        <name>Ni(2+)</name>
        <dbReference type="ChEBI" id="CHEBI:49786"/>
    </ligand>
</feature>
<feature type="binding site" evidence="1">
    <location>
        <position position="90"/>
    </location>
    <ligand>
        <name>Ni(2+)</name>
        <dbReference type="ChEBI" id="CHEBI:49786"/>
    </ligand>
</feature>
<feature type="binding site" evidence="1">
    <location>
        <position position="96"/>
    </location>
    <ligand>
        <name>Ni(2+)</name>
        <dbReference type="ChEBI" id="CHEBI:49786"/>
    </ligand>
</feature>
<dbReference type="EMBL" id="CP000709">
    <property type="protein sequence ID" value="ABQ62195.1"/>
    <property type="molecule type" value="Genomic_DNA"/>
</dbReference>
<dbReference type="SMR" id="A5VV94"/>
<dbReference type="KEGG" id="bov:BOV_A0755"/>
<dbReference type="HOGENOM" id="CLU_113319_1_4_5"/>
<dbReference type="PhylomeDB" id="A5VV94"/>
<dbReference type="Proteomes" id="UP000006383">
    <property type="component" value="Chromosome II"/>
</dbReference>
<dbReference type="GO" id="GO:0003677">
    <property type="term" value="F:DNA binding"/>
    <property type="evidence" value="ECO:0007669"/>
    <property type="project" value="UniProtKB-KW"/>
</dbReference>
<dbReference type="GO" id="GO:0003700">
    <property type="term" value="F:DNA-binding transcription factor activity"/>
    <property type="evidence" value="ECO:0007669"/>
    <property type="project" value="UniProtKB-UniRule"/>
</dbReference>
<dbReference type="GO" id="GO:0016151">
    <property type="term" value="F:nickel cation binding"/>
    <property type="evidence" value="ECO:0007669"/>
    <property type="project" value="UniProtKB-UniRule"/>
</dbReference>
<dbReference type="GO" id="GO:0010045">
    <property type="term" value="P:response to nickel cation"/>
    <property type="evidence" value="ECO:0007669"/>
    <property type="project" value="InterPro"/>
</dbReference>
<dbReference type="CDD" id="cd22231">
    <property type="entry name" value="RHH_NikR_HicB-like"/>
    <property type="match status" value="1"/>
</dbReference>
<dbReference type="Gene3D" id="3.30.70.1150">
    <property type="entry name" value="ACT-like. Chain A, domain 2"/>
    <property type="match status" value="1"/>
</dbReference>
<dbReference type="Gene3D" id="1.10.1220.10">
    <property type="entry name" value="Met repressor-like"/>
    <property type="match status" value="1"/>
</dbReference>
<dbReference type="HAMAP" id="MF_00476">
    <property type="entry name" value="NikR"/>
    <property type="match status" value="1"/>
</dbReference>
<dbReference type="InterPro" id="IPR027271">
    <property type="entry name" value="Acetolactate_synth/TF_NikR_C"/>
</dbReference>
<dbReference type="InterPro" id="IPR045865">
    <property type="entry name" value="ACT-like_dom_sf"/>
</dbReference>
<dbReference type="InterPro" id="IPR013321">
    <property type="entry name" value="Arc_rbn_hlx_hlx"/>
</dbReference>
<dbReference type="InterPro" id="IPR002145">
    <property type="entry name" value="CopG"/>
</dbReference>
<dbReference type="InterPro" id="IPR050192">
    <property type="entry name" value="CopG/NikR_regulator"/>
</dbReference>
<dbReference type="InterPro" id="IPR022988">
    <property type="entry name" value="Ni_resp_reg_NikR"/>
</dbReference>
<dbReference type="InterPro" id="IPR014160">
    <property type="entry name" value="Nickel_NikR_proteobac"/>
</dbReference>
<dbReference type="InterPro" id="IPR010985">
    <property type="entry name" value="Ribbon_hlx_hlx"/>
</dbReference>
<dbReference type="InterPro" id="IPR014864">
    <property type="entry name" value="TF_NikR_Ni-bd_C"/>
</dbReference>
<dbReference type="NCBIfam" id="TIGR02793">
    <property type="entry name" value="nikR"/>
    <property type="match status" value="1"/>
</dbReference>
<dbReference type="NCBIfam" id="NF002815">
    <property type="entry name" value="PRK02967.1"/>
    <property type="match status" value="1"/>
</dbReference>
<dbReference type="NCBIfam" id="NF003381">
    <property type="entry name" value="PRK04460.1"/>
    <property type="match status" value="1"/>
</dbReference>
<dbReference type="PANTHER" id="PTHR34719">
    <property type="entry name" value="NICKEL-RESPONSIVE REGULATOR"/>
    <property type="match status" value="1"/>
</dbReference>
<dbReference type="PANTHER" id="PTHR34719:SF2">
    <property type="entry name" value="NICKEL-RESPONSIVE REGULATOR"/>
    <property type="match status" value="1"/>
</dbReference>
<dbReference type="Pfam" id="PF08753">
    <property type="entry name" value="NikR_C"/>
    <property type="match status" value="1"/>
</dbReference>
<dbReference type="Pfam" id="PF01402">
    <property type="entry name" value="RHH_1"/>
    <property type="match status" value="1"/>
</dbReference>
<dbReference type="SUPFAM" id="SSF55021">
    <property type="entry name" value="ACT-like"/>
    <property type="match status" value="1"/>
</dbReference>
<dbReference type="SUPFAM" id="SSF47598">
    <property type="entry name" value="Ribbon-helix-helix"/>
    <property type="match status" value="1"/>
</dbReference>
<comment type="function">
    <text evidence="1">Transcriptional regulator.</text>
</comment>
<comment type="cofactor">
    <cofactor evidence="1">
        <name>Ni(2+)</name>
        <dbReference type="ChEBI" id="CHEBI:49786"/>
    </cofactor>
    <text evidence="1">Binds 1 nickel ion per subunit.</text>
</comment>
<comment type="similarity">
    <text evidence="1">Belongs to the transcriptional regulatory CopG/NikR family.</text>
</comment>
<name>NIKR_BRUO2</name>
<proteinExistence type="inferred from homology"/>
<protein>
    <recommendedName>
        <fullName evidence="1">Putative nickel-responsive regulator</fullName>
    </recommendedName>
</protein>
<gene>
    <name type="ordered locus">BOV_A0755</name>
</gene>
<organism>
    <name type="scientific">Brucella ovis (strain ATCC 25840 / 63/290 / NCTC 10512)</name>
    <dbReference type="NCBI Taxonomy" id="444178"/>
    <lineage>
        <taxon>Bacteria</taxon>
        <taxon>Pseudomonadati</taxon>
        <taxon>Pseudomonadota</taxon>
        <taxon>Alphaproteobacteria</taxon>
        <taxon>Hyphomicrobiales</taxon>
        <taxon>Brucellaceae</taxon>
        <taxon>Brucella/Ochrobactrum group</taxon>
        <taxon>Brucella</taxon>
    </lineage>
</organism>
<sequence>MQRITITIDDDLMAALDRMIEIKGYQNRSEALRDLARTGLQQASLEEGQMEACVGVLSYTYDHSARDLSKKLTNTHHDHHNISVASMHVHLDHDRCLEVSILKGKTDDVRHFADHVKAERHVTHGTLAVLPL</sequence>
<accession>A5VV94</accession>
<keyword id="KW-0238">DNA-binding</keyword>
<keyword id="KW-0479">Metal-binding</keyword>
<keyword id="KW-0533">Nickel</keyword>
<keyword id="KW-0804">Transcription</keyword>
<keyword id="KW-0805">Transcription regulation</keyword>